<organism>
    <name type="scientific">Methylobacterium radiotolerans (strain ATCC 27329 / DSM 1819 / JCM 2831 / NBRC 15690 / NCIMB 10815 / 0-1)</name>
    <dbReference type="NCBI Taxonomy" id="426355"/>
    <lineage>
        <taxon>Bacteria</taxon>
        <taxon>Pseudomonadati</taxon>
        <taxon>Pseudomonadota</taxon>
        <taxon>Alphaproteobacteria</taxon>
        <taxon>Hyphomicrobiales</taxon>
        <taxon>Methylobacteriaceae</taxon>
        <taxon>Methylobacterium</taxon>
    </lineage>
</organism>
<dbReference type="EMBL" id="CP001001">
    <property type="protein sequence ID" value="ACB22617.1"/>
    <property type="molecule type" value="Genomic_DNA"/>
</dbReference>
<dbReference type="RefSeq" id="WP_012317613.1">
    <property type="nucleotide sequence ID" value="NC_010505.1"/>
</dbReference>
<dbReference type="SMR" id="B1LVH2"/>
<dbReference type="STRING" id="426355.Mrad2831_0606"/>
<dbReference type="GeneID" id="6136620"/>
<dbReference type="KEGG" id="mrd:Mrad2831_0606"/>
<dbReference type="PATRIC" id="fig|426355.14.peg.636"/>
<dbReference type="eggNOG" id="COG0712">
    <property type="taxonomic scope" value="Bacteria"/>
</dbReference>
<dbReference type="HOGENOM" id="CLU_085114_0_1_5"/>
<dbReference type="OrthoDB" id="9796185at2"/>
<dbReference type="Proteomes" id="UP000006589">
    <property type="component" value="Chromosome"/>
</dbReference>
<dbReference type="GO" id="GO:0005886">
    <property type="term" value="C:plasma membrane"/>
    <property type="evidence" value="ECO:0007669"/>
    <property type="project" value="UniProtKB-SubCell"/>
</dbReference>
<dbReference type="GO" id="GO:0045259">
    <property type="term" value="C:proton-transporting ATP synthase complex"/>
    <property type="evidence" value="ECO:0007669"/>
    <property type="project" value="UniProtKB-KW"/>
</dbReference>
<dbReference type="GO" id="GO:0046933">
    <property type="term" value="F:proton-transporting ATP synthase activity, rotational mechanism"/>
    <property type="evidence" value="ECO:0007669"/>
    <property type="project" value="UniProtKB-UniRule"/>
</dbReference>
<dbReference type="Gene3D" id="1.10.520.20">
    <property type="entry name" value="N-terminal domain of the delta subunit of the F1F0-ATP synthase"/>
    <property type="match status" value="1"/>
</dbReference>
<dbReference type="HAMAP" id="MF_01416">
    <property type="entry name" value="ATP_synth_delta_bact"/>
    <property type="match status" value="1"/>
</dbReference>
<dbReference type="InterPro" id="IPR026015">
    <property type="entry name" value="ATP_synth_OSCP/delta_N_sf"/>
</dbReference>
<dbReference type="InterPro" id="IPR020781">
    <property type="entry name" value="ATPase_OSCP/d_CS"/>
</dbReference>
<dbReference type="InterPro" id="IPR000711">
    <property type="entry name" value="ATPase_OSCP/dsu"/>
</dbReference>
<dbReference type="NCBIfam" id="TIGR01145">
    <property type="entry name" value="ATP_synt_delta"/>
    <property type="match status" value="1"/>
</dbReference>
<dbReference type="NCBIfam" id="NF004406">
    <property type="entry name" value="PRK05758.3-2"/>
    <property type="match status" value="1"/>
</dbReference>
<dbReference type="PANTHER" id="PTHR11910">
    <property type="entry name" value="ATP SYNTHASE DELTA CHAIN"/>
    <property type="match status" value="1"/>
</dbReference>
<dbReference type="Pfam" id="PF00213">
    <property type="entry name" value="OSCP"/>
    <property type="match status" value="1"/>
</dbReference>
<dbReference type="PRINTS" id="PR00125">
    <property type="entry name" value="ATPASEDELTA"/>
</dbReference>
<dbReference type="SUPFAM" id="SSF47928">
    <property type="entry name" value="N-terminal domain of the delta subunit of the F1F0-ATP synthase"/>
    <property type="match status" value="1"/>
</dbReference>
<dbReference type="PROSITE" id="PS00389">
    <property type="entry name" value="ATPASE_DELTA"/>
    <property type="match status" value="1"/>
</dbReference>
<protein>
    <recommendedName>
        <fullName evidence="1">ATP synthase subunit delta</fullName>
    </recommendedName>
    <alternativeName>
        <fullName evidence="1">ATP synthase F(1) sector subunit delta</fullName>
    </alternativeName>
    <alternativeName>
        <fullName evidence="1">F-type ATPase subunit delta</fullName>
        <shortName evidence="1">F-ATPase subunit delta</shortName>
    </alternativeName>
</protein>
<sequence length="190" mass="20212">MAQNGSEAGPLVAGVAGRYASALFELARDERQVDAVAESLNQFDGLLKESADLRRLVRSPVFSAEEQEAAIGAVLDKAGIGGLAGNFIRLAASNRRLFALPDMIDAFRALVQDSKGIVRAQVRVAERPSDAVIEEIKASLRDIAKADVDVDLVVDPSLIGGLVVKMGSRMVDASLKTKLNGIRLAMRAAR</sequence>
<name>ATPD_METRJ</name>
<feature type="chain" id="PRO_0000371025" description="ATP synthase subunit delta">
    <location>
        <begin position="1"/>
        <end position="190"/>
    </location>
</feature>
<accession>B1LVH2</accession>
<proteinExistence type="inferred from homology"/>
<gene>
    <name evidence="1" type="primary">atpH</name>
    <name type="ordered locus">Mrad2831_0606</name>
</gene>
<keyword id="KW-0066">ATP synthesis</keyword>
<keyword id="KW-0997">Cell inner membrane</keyword>
<keyword id="KW-1003">Cell membrane</keyword>
<keyword id="KW-0139">CF(1)</keyword>
<keyword id="KW-0375">Hydrogen ion transport</keyword>
<keyword id="KW-0406">Ion transport</keyword>
<keyword id="KW-0472">Membrane</keyword>
<keyword id="KW-0813">Transport</keyword>
<comment type="function">
    <text evidence="1">F(1)F(0) ATP synthase produces ATP from ADP in the presence of a proton or sodium gradient. F-type ATPases consist of two structural domains, F(1) containing the extramembraneous catalytic core and F(0) containing the membrane proton channel, linked together by a central stalk and a peripheral stalk. During catalysis, ATP synthesis in the catalytic domain of F(1) is coupled via a rotary mechanism of the central stalk subunits to proton translocation.</text>
</comment>
<comment type="function">
    <text evidence="1">This protein is part of the stalk that links CF(0) to CF(1). It either transmits conformational changes from CF(0) to CF(1) or is implicated in proton conduction.</text>
</comment>
<comment type="subunit">
    <text evidence="1">F-type ATPases have 2 components, F(1) - the catalytic core - and F(0) - the membrane proton channel. F(1) has five subunits: alpha(3), beta(3), gamma(1), delta(1), epsilon(1). F(0) has three main subunits: a(1), b(2) and c(10-14). The alpha and beta chains form an alternating ring which encloses part of the gamma chain. F(1) is attached to F(0) by a central stalk formed by the gamma and epsilon chains, while a peripheral stalk is formed by the delta and b chains.</text>
</comment>
<comment type="subcellular location">
    <subcellularLocation>
        <location evidence="1">Cell inner membrane</location>
        <topology evidence="1">Peripheral membrane protein</topology>
    </subcellularLocation>
</comment>
<comment type="similarity">
    <text evidence="1">Belongs to the ATPase delta chain family.</text>
</comment>
<evidence type="ECO:0000255" key="1">
    <source>
        <dbReference type="HAMAP-Rule" id="MF_01416"/>
    </source>
</evidence>
<reference key="1">
    <citation type="submission" date="2008-03" db="EMBL/GenBank/DDBJ databases">
        <title>Complete sequence of chromosome of Methylobacterium radiotolerans JCM 2831.</title>
        <authorList>
            <consortium name="US DOE Joint Genome Institute"/>
            <person name="Copeland A."/>
            <person name="Lucas S."/>
            <person name="Lapidus A."/>
            <person name="Glavina del Rio T."/>
            <person name="Dalin E."/>
            <person name="Tice H."/>
            <person name="Bruce D."/>
            <person name="Goodwin L."/>
            <person name="Pitluck S."/>
            <person name="Kiss H."/>
            <person name="Brettin T."/>
            <person name="Detter J.C."/>
            <person name="Han C."/>
            <person name="Kuske C.R."/>
            <person name="Schmutz J."/>
            <person name="Larimer F."/>
            <person name="Land M."/>
            <person name="Hauser L."/>
            <person name="Kyrpides N."/>
            <person name="Mikhailova N."/>
            <person name="Marx C.J."/>
            <person name="Richardson P."/>
        </authorList>
    </citation>
    <scope>NUCLEOTIDE SEQUENCE [LARGE SCALE GENOMIC DNA]</scope>
    <source>
        <strain>ATCC 27329 / DSM 1819 / JCM 2831 / NBRC 15690 / NCIMB 10815 / 0-1</strain>
    </source>
</reference>